<evidence type="ECO:0000250" key="1"/>
<evidence type="ECO:0000255" key="2"/>
<evidence type="ECO:0000305" key="3"/>
<feature type="signal peptide" evidence="2">
    <location>
        <begin position="1"/>
        <end position="34"/>
    </location>
</feature>
<feature type="chain" id="PRO_0000027328" description="Putative hydrolase Mb2247c">
    <location>
        <begin position="35"/>
        <end position="520"/>
    </location>
</feature>
<feature type="transmembrane region" description="Helical" evidence="2">
    <location>
        <begin position="104"/>
        <end position="124"/>
    </location>
</feature>
<feature type="domain" description="AB hydrolase-1" evidence="2">
    <location>
        <begin position="105"/>
        <end position="403"/>
    </location>
</feature>
<feature type="active site" description="Nucleophile" evidence="1">
    <location>
        <position position="232"/>
    </location>
</feature>
<feature type="active site" evidence="1">
    <location>
        <position position="461"/>
    </location>
</feature>
<feature type="active site" description="Proton donor" evidence="1">
    <location>
        <position position="488"/>
    </location>
</feature>
<reference key="1">
    <citation type="journal article" date="2003" name="Proc. Natl. Acad. Sci. U.S.A.">
        <title>The complete genome sequence of Mycobacterium bovis.</title>
        <authorList>
            <person name="Garnier T."/>
            <person name="Eiglmeier K."/>
            <person name="Camus J.-C."/>
            <person name="Medina N."/>
            <person name="Mansoor H."/>
            <person name="Pryor M."/>
            <person name="Duthoy S."/>
            <person name="Grondin S."/>
            <person name="Lacroix C."/>
            <person name="Monsempe C."/>
            <person name="Simon S."/>
            <person name="Harris B."/>
            <person name="Atkin R."/>
            <person name="Doggett J."/>
            <person name="Mayes R."/>
            <person name="Keating L."/>
            <person name="Wheeler P.R."/>
            <person name="Parkhill J."/>
            <person name="Barrell B.G."/>
            <person name="Cole S.T."/>
            <person name="Gordon S.V."/>
            <person name="Hewinson R.G."/>
        </authorList>
    </citation>
    <scope>NUCLEOTIDE SEQUENCE [LARGE SCALE GENOMIC DNA]</scope>
    <source>
        <strain>ATCC BAA-935 / AF2122/97</strain>
    </source>
</reference>
<reference key="2">
    <citation type="journal article" date="2017" name="Genome Announc.">
        <title>Updated reference genome sequence and annotation of Mycobacterium bovis AF2122/97.</title>
        <authorList>
            <person name="Malone K.M."/>
            <person name="Farrell D."/>
            <person name="Stuber T.P."/>
            <person name="Schubert O.T."/>
            <person name="Aebersold R."/>
            <person name="Robbe-Austerman S."/>
            <person name="Gordon S.V."/>
        </authorList>
    </citation>
    <scope>NUCLEOTIDE SEQUENCE [LARGE SCALE GENOMIC DNA]</scope>
    <scope>GENOME REANNOTATION</scope>
    <source>
        <strain>ATCC BAA-935 / AF2122/97</strain>
    </source>
</reference>
<gene>
    <name type="ordered locus">BQ2027_MB2247C</name>
</gene>
<name>Y2247_MYCBO</name>
<comment type="subcellular location">
    <subcellularLocation>
        <location evidence="3">Cell membrane</location>
        <topology evidence="3">Single-pass membrane protein</topology>
    </subcellularLocation>
</comment>
<comment type="similarity">
    <text evidence="3">Belongs to the peptidase S33 family.</text>
</comment>
<accession>P65822</accession>
<accession>A0A1R3Y1B5</accession>
<accession>Q10508</accession>
<accession>X2BKG1</accession>
<protein>
    <recommendedName>
        <fullName>Putative hydrolase Mb2247c</fullName>
        <ecNumber>3.4.-.-</ecNumber>
    </recommendedName>
</protein>
<dbReference type="EC" id="3.4.-.-"/>
<dbReference type="EMBL" id="LT708304">
    <property type="protein sequence ID" value="SIU00855.1"/>
    <property type="molecule type" value="Genomic_DNA"/>
</dbReference>
<dbReference type="RefSeq" id="NP_855896.1">
    <property type="nucleotide sequence ID" value="NC_002945.3"/>
</dbReference>
<dbReference type="SMR" id="P65822"/>
<dbReference type="ESTHER" id="myctu-ym23">
    <property type="family name" value="Tiancimycin-TnmK-Tripeptidase-HIP"/>
</dbReference>
<dbReference type="KEGG" id="mbo:BQ2027_MB2247C"/>
<dbReference type="PATRIC" id="fig|233413.5.peg.2464"/>
<dbReference type="Proteomes" id="UP000001419">
    <property type="component" value="Chromosome"/>
</dbReference>
<dbReference type="GO" id="GO:0005886">
    <property type="term" value="C:plasma membrane"/>
    <property type="evidence" value="ECO:0007669"/>
    <property type="project" value="UniProtKB-SubCell"/>
</dbReference>
<dbReference type="GO" id="GO:0016787">
    <property type="term" value="F:hydrolase activity"/>
    <property type="evidence" value="ECO:0007669"/>
    <property type="project" value="UniProtKB-KW"/>
</dbReference>
<dbReference type="Gene3D" id="3.40.50.1820">
    <property type="entry name" value="alpha/beta hydrolase"/>
    <property type="match status" value="1"/>
</dbReference>
<dbReference type="InterPro" id="IPR000073">
    <property type="entry name" value="AB_hydrolase_1"/>
</dbReference>
<dbReference type="InterPro" id="IPR029058">
    <property type="entry name" value="AB_hydrolase_fold"/>
</dbReference>
<dbReference type="InterPro" id="IPR051601">
    <property type="entry name" value="Serine_prot/Carboxylest_S33"/>
</dbReference>
<dbReference type="PANTHER" id="PTHR43248">
    <property type="entry name" value="2-SUCCINYL-6-HYDROXY-2,4-CYCLOHEXADIENE-1-CARBOXYLATE SYNTHASE"/>
    <property type="match status" value="1"/>
</dbReference>
<dbReference type="PANTHER" id="PTHR43248:SF29">
    <property type="entry name" value="TRIPEPTIDYL AMINOPEPTIDASE"/>
    <property type="match status" value="1"/>
</dbReference>
<dbReference type="Pfam" id="PF00561">
    <property type="entry name" value="Abhydrolase_1"/>
    <property type="match status" value="1"/>
</dbReference>
<dbReference type="SUPFAM" id="SSF53474">
    <property type="entry name" value="alpha/beta-Hydrolases"/>
    <property type="match status" value="1"/>
</dbReference>
<organism>
    <name type="scientific">Mycobacterium bovis (strain ATCC BAA-935 / AF2122/97)</name>
    <dbReference type="NCBI Taxonomy" id="233413"/>
    <lineage>
        <taxon>Bacteria</taxon>
        <taxon>Bacillati</taxon>
        <taxon>Actinomycetota</taxon>
        <taxon>Actinomycetes</taxon>
        <taxon>Mycobacteriales</taxon>
        <taxon>Mycobacteriaceae</taxon>
        <taxon>Mycobacterium</taxon>
        <taxon>Mycobacterium tuberculosis complex</taxon>
    </lineage>
</organism>
<proteinExistence type="inferred from homology"/>
<sequence>MAAMWRRRPLSSALLSFGLLLGGLPLAAPPLAGATEEPGAGQTPGAPVVAPQQSWNSCREFIADTSEIRTARCATVSVPVDYDQPGGTQAKLAVIRVPATGQRFGALLVNPGGPGASAVDMVAAMAPAIADTDILRHFDLVGFDPRGVGHSTPALRCRTDAEFDAYRRDPMADYSPAGVTHVEQVYRQLAQDCVDRMGFSFLANIGTASVARDMDMVRQALGDDQINYLGYSYGTELGTAYLERFGTHVRAMVLDGAIDPAVSPIEESISQMAGFQTAFNDYAADCARSPACPLGTDSAQWVNRYHALVDPLVQKPGKTSDPRGLSYADATTGTINALYSPQRWKYLTSGLLGLQRGSDAGDLLVLADDYDGRDADGHYSNDQDAFNAVRCVDAPTPADPAAWVAADQRIRQVAPFLSYGQFTGSAPRDLCALWPVPATSTPHPAAPAGAGKVVVVSTTHDPATPYQSGVDLARQLGAPLITFDGTQHTAVFDGNQCVDSAVMHYFLDGTLPPTSLRCAP</sequence>
<keyword id="KW-1003">Cell membrane</keyword>
<keyword id="KW-0378">Hydrolase</keyword>
<keyword id="KW-0472">Membrane</keyword>
<keyword id="KW-1185">Reference proteome</keyword>
<keyword id="KW-0732">Signal</keyword>
<keyword id="KW-0812">Transmembrane</keyword>
<keyword id="KW-1133">Transmembrane helix</keyword>